<reference key="1">
    <citation type="journal article" date="2006" name="BMC Genomics">
        <title>Comparative genome analysis: selection pressure on the Borrelia vls cassettes is essential for infectivity.</title>
        <authorList>
            <person name="Gloeckner G."/>
            <person name="Schulte-Spechtel U."/>
            <person name="Schilhabel M."/>
            <person name="Felder M."/>
            <person name="Suehnel J."/>
            <person name="Wilske B."/>
            <person name="Platzer M."/>
        </authorList>
    </citation>
    <scope>NUCLEOTIDE SEQUENCE [LARGE SCALE GENOMIC DNA]</scope>
    <source>
        <strain>PKo</strain>
    </source>
</reference>
<reference key="2">
    <citation type="journal article" date="2011" name="J. Bacteriol.">
        <title>Whole-genome sequences of two Borrelia afzelii and two Borrelia garinii Lyme disease agent isolates.</title>
        <authorList>
            <person name="Casjens S.R."/>
            <person name="Mongodin E.F."/>
            <person name="Qiu W.G."/>
            <person name="Dunn J.J."/>
            <person name="Luft B.J."/>
            <person name="Fraser-Liggett C.M."/>
            <person name="Schutzer S.E."/>
        </authorList>
    </citation>
    <scope>NUCLEOTIDE SEQUENCE [LARGE SCALE GENOMIC DNA]</scope>
    <source>
        <strain>PKo</strain>
    </source>
</reference>
<accession>Q0SN68</accession>
<accession>G0IS83</accession>
<gene>
    <name evidence="1" type="primary">rnpA</name>
    <name type="ordered locus">BAPKO_0463</name>
    <name type="ordered locus">BafPKo_0452</name>
</gene>
<keyword id="KW-0255">Endonuclease</keyword>
<keyword id="KW-0378">Hydrolase</keyword>
<keyword id="KW-0540">Nuclease</keyword>
<keyword id="KW-0694">RNA-binding</keyword>
<keyword id="KW-0819">tRNA processing</keyword>
<proteinExistence type="inferred from homology"/>
<comment type="function">
    <text evidence="1">RNaseP catalyzes the removal of the 5'-leader sequence from pre-tRNA to produce the mature 5'-terminus. It can also cleave other RNA substrates such as 4.5S RNA. The protein component plays an auxiliary but essential role in vivo by binding to the 5'-leader sequence and broadening the substrate specificity of the ribozyme.</text>
</comment>
<comment type="catalytic activity">
    <reaction evidence="1">
        <text>Endonucleolytic cleavage of RNA, removing 5'-extranucleotides from tRNA precursor.</text>
        <dbReference type="EC" id="3.1.26.5"/>
    </reaction>
</comment>
<comment type="subunit">
    <text evidence="1">Consists of a catalytic RNA component (M1 or rnpB) and a protein subunit.</text>
</comment>
<comment type="similarity">
    <text evidence="1">Belongs to the RnpA family.</text>
</comment>
<evidence type="ECO:0000255" key="1">
    <source>
        <dbReference type="HAMAP-Rule" id="MF_00227"/>
    </source>
</evidence>
<organism>
    <name type="scientific">Borreliella afzelii (strain PKo)</name>
    <name type="common">Borrelia afzelii</name>
    <dbReference type="NCBI Taxonomy" id="390236"/>
    <lineage>
        <taxon>Bacteria</taxon>
        <taxon>Pseudomonadati</taxon>
        <taxon>Spirochaetota</taxon>
        <taxon>Spirochaetia</taxon>
        <taxon>Spirochaetales</taxon>
        <taxon>Borreliaceae</taxon>
        <taxon>Borreliella</taxon>
    </lineage>
</organism>
<name>RNPA_BORAP</name>
<protein>
    <recommendedName>
        <fullName evidence="1">Ribonuclease P protein component</fullName>
        <shortName evidence="1">RNase P protein</shortName>
        <shortName evidence="1">RNaseP protein</shortName>
        <ecNumber evidence="1">3.1.26.5</ecNumber>
    </recommendedName>
    <alternativeName>
        <fullName evidence="1">Protein C5</fullName>
    </alternativeName>
</protein>
<sequence length="111" mass="13343">MKKRNISLKSKIEIQKIFKEGNLIRFSNLNLKMFCKSNHLIYSRLLVTFSKSFRGSVKRNRVRRLFKEAFRKRLELLEGRAIDIIFVVYYDRLDLTYFSIESLMKSLVLMV</sequence>
<feature type="chain" id="PRO_1000021380" description="Ribonuclease P protein component">
    <location>
        <begin position="1"/>
        <end position="111"/>
    </location>
</feature>
<dbReference type="EC" id="3.1.26.5" evidence="1"/>
<dbReference type="EMBL" id="CP000395">
    <property type="protein sequence ID" value="ABH01710.1"/>
    <property type="molecule type" value="Genomic_DNA"/>
</dbReference>
<dbReference type="EMBL" id="CP002933">
    <property type="protein sequence ID" value="AEL69664.1"/>
    <property type="molecule type" value="Genomic_DNA"/>
</dbReference>
<dbReference type="RefSeq" id="WP_011601028.1">
    <property type="nucleotide sequence ID" value="NZ_CP160066.1"/>
</dbReference>
<dbReference type="SMR" id="Q0SN68"/>
<dbReference type="STRING" id="29518.BLA32_02075"/>
<dbReference type="GeneID" id="77265284"/>
<dbReference type="KEGG" id="baf:BAPKO_0463"/>
<dbReference type="KEGG" id="bafz:BafPKo_0452"/>
<dbReference type="PATRIC" id="fig|390236.22.peg.436"/>
<dbReference type="eggNOG" id="COG0594">
    <property type="taxonomic scope" value="Bacteria"/>
</dbReference>
<dbReference type="HOGENOM" id="CLU_2116283_0_0_12"/>
<dbReference type="OrthoDB" id="350607at2"/>
<dbReference type="Proteomes" id="UP000005216">
    <property type="component" value="Chromosome"/>
</dbReference>
<dbReference type="GO" id="GO:0030677">
    <property type="term" value="C:ribonuclease P complex"/>
    <property type="evidence" value="ECO:0007669"/>
    <property type="project" value="TreeGrafter"/>
</dbReference>
<dbReference type="GO" id="GO:0042781">
    <property type="term" value="F:3'-tRNA processing endoribonuclease activity"/>
    <property type="evidence" value="ECO:0007669"/>
    <property type="project" value="TreeGrafter"/>
</dbReference>
<dbReference type="GO" id="GO:0004526">
    <property type="term" value="F:ribonuclease P activity"/>
    <property type="evidence" value="ECO:0007669"/>
    <property type="project" value="UniProtKB-UniRule"/>
</dbReference>
<dbReference type="GO" id="GO:0000049">
    <property type="term" value="F:tRNA binding"/>
    <property type="evidence" value="ECO:0007669"/>
    <property type="project" value="UniProtKB-UniRule"/>
</dbReference>
<dbReference type="GO" id="GO:0001682">
    <property type="term" value="P:tRNA 5'-leader removal"/>
    <property type="evidence" value="ECO:0007669"/>
    <property type="project" value="UniProtKB-UniRule"/>
</dbReference>
<dbReference type="Gene3D" id="3.30.230.10">
    <property type="match status" value="1"/>
</dbReference>
<dbReference type="HAMAP" id="MF_00227">
    <property type="entry name" value="RNase_P"/>
    <property type="match status" value="1"/>
</dbReference>
<dbReference type="InterPro" id="IPR020568">
    <property type="entry name" value="Ribosomal_Su5_D2-typ_SF"/>
</dbReference>
<dbReference type="InterPro" id="IPR014721">
    <property type="entry name" value="Ribsml_uS5_D2-typ_fold_subgr"/>
</dbReference>
<dbReference type="InterPro" id="IPR000100">
    <property type="entry name" value="RNase_P"/>
</dbReference>
<dbReference type="NCBIfam" id="TIGR00188">
    <property type="entry name" value="rnpA"/>
    <property type="match status" value="1"/>
</dbReference>
<dbReference type="PANTHER" id="PTHR33992">
    <property type="entry name" value="RIBONUCLEASE P PROTEIN COMPONENT"/>
    <property type="match status" value="1"/>
</dbReference>
<dbReference type="PANTHER" id="PTHR33992:SF1">
    <property type="entry name" value="RIBONUCLEASE P PROTEIN COMPONENT"/>
    <property type="match status" value="1"/>
</dbReference>
<dbReference type="Pfam" id="PF00825">
    <property type="entry name" value="Ribonuclease_P"/>
    <property type="match status" value="1"/>
</dbReference>
<dbReference type="SUPFAM" id="SSF54211">
    <property type="entry name" value="Ribosomal protein S5 domain 2-like"/>
    <property type="match status" value="1"/>
</dbReference>